<accession>A3NAU5</accession>
<sequence length="186" mass="20899">MSVADIKKSVEQKMQRSIEAFKNDLAKIRTGRAHTGLLDHVQVDYYGSMVPISQVANLTLVDARTIGVQPWEKTMVAKVEKAIREADLGLNPATSGDLIRVPMPPLTEERRRELTKVVKSEGETAKVAVRNLRRDANEQLKKLVKDKEISEDDERRASDDVQKLTDKHVAEIDKLVQAKDAEIMTV</sequence>
<comment type="function">
    <text evidence="1">Responsible for the release of ribosomes from messenger RNA at the termination of protein biosynthesis. May increase the efficiency of translation by recycling ribosomes from one round of translation to another.</text>
</comment>
<comment type="subcellular location">
    <subcellularLocation>
        <location evidence="1">Cytoplasm</location>
    </subcellularLocation>
</comment>
<comment type="similarity">
    <text evidence="1">Belongs to the RRF family.</text>
</comment>
<name>RRF_BURP6</name>
<gene>
    <name evidence="1" type="primary">frr</name>
    <name type="ordered locus">BURPS668_2434</name>
</gene>
<organism>
    <name type="scientific">Burkholderia pseudomallei (strain 668)</name>
    <dbReference type="NCBI Taxonomy" id="320373"/>
    <lineage>
        <taxon>Bacteria</taxon>
        <taxon>Pseudomonadati</taxon>
        <taxon>Pseudomonadota</taxon>
        <taxon>Betaproteobacteria</taxon>
        <taxon>Burkholderiales</taxon>
        <taxon>Burkholderiaceae</taxon>
        <taxon>Burkholderia</taxon>
        <taxon>pseudomallei group</taxon>
    </lineage>
</organism>
<proteinExistence type="inferred from homology"/>
<dbReference type="EMBL" id="CP000570">
    <property type="protein sequence ID" value="ABN82885.1"/>
    <property type="molecule type" value="Genomic_DNA"/>
</dbReference>
<dbReference type="RefSeq" id="WP_004192143.1">
    <property type="nucleotide sequence ID" value="NC_009074.1"/>
</dbReference>
<dbReference type="SMR" id="A3NAU5"/>
<dbReference type="GeneID" id="93060697"/>
<dbReference type="KEGG" id="bpd:BURPS668_2434"/>
<dbReference type="HOGENOM" id="CLU_073981_2_1_4"/>
<dbReference type="GO" id="GO:0005829">
    <property type="term" value="C:cytosol"/>
    <property type="evidence" value="ECO:0007669"/>
    <property type="project" value="GOC"/>
</dbReference>
<dbReference type="GO" id="GO:0043023">
    <property type="term" value="F:ribosomal large subunit binding"/>
    <property type="evidence" value="ECO:0007669"/>
    <property type="project" value="TreeGrafter"/>
</dbReference>
<dbReference type="GO" id="GO:0002184">
    <property type="term" value="P:cytoplasmic translational termination"/>
    <property type="evidence" value="ECO:0007669"/>
    <property type="project" value="TreeGrafter"/>
</dbReference>
<dbReference type="CDD" id="cd00520">
    <property type="entry name" value="RRF"/>
    <property type="match status" value="1"/>
</dbReference>
<dbReference type="FunFam" id="1.10.132.20:FF:000001">
    <property type="entry name" value="Ribosome-recycling factor"/>
    <property type="match status" value="1"/>
</dbReference>
<dbReference type="FunFam" id="3.30.1360.40:FF:000001">
    <property type="entry name" value="Ribosome-recycling factor"/>
    <property type="match status" value="1"/>
</dbReference>
<dbReference type="Gene3D" id="3.30.1360.40">
    <property type="match status" value="1"/>
</dbReference>
<dbReference type="Gene3D" id="1.10.132.20">
    <property type="entry name" value="Ribosome-recycling factor"/>
    <property type="match status" value="1"/>
</dbReference>
<dbReference type="HAMAP" id="MF_00040">
    <property type="entry name" value="RRF"/>
    <property type="match status" value="1"/>
</dbReference>
<dbReference type="InterPro" id="IPR002661">
    <property type="entry name" value="Ribosome_recyc_fac"/>
</dbReference>
<dbReference type="InterPro" id="IPR023584">
    <property type="entry name" value="Ribosome_recyc_fac_dom"/>
</dbReference>
<dbReference type="InterPro" id="IPR036191">
    <property type="entry name" value="RRF_sf"/>
</dbReference>
<dbReference type="NCBIfam" id="TIGR00496">
    <property type="entry name" value="frr"/>
    <property type="match status" value="1"/>
</dbReference>
<dbReference type="PANTHER" id="PTHR20982:SF3">
    <property type="entry name" value="MITOCHONDRIAL RIBOSOME RECYCLING FACTOR PSEUDO 1"/>
    <property type="match status" value="1"/>
</dbReference>
<dbReference type="PANTHER" id="PTHR20982">
    <property type="entry name" value="RIBOSOME RECYCLING FACTOR"/>
    <property type="match status" value="1"/>
</dbReference>
<dbReference type="Pfam" id="PF01765">
    <property type="entry name" value="RRF"/>
    <property type="match status" value="1"/>
</dbReference>
<dbReference type="SUPFAM" id="SSF55194">
    <property type="entry name" value="Ribosome recycling factor, RRF"/>
    <property type="match status" value="1"/>
</dbReference>
<evidence type="ECO:0000255" key="1">
    <source>
        <dbReference type="HAMAP-Rule" id="MF_00040"/>
    </source>
</evidence>
<protein>
    <recommendedName>
        <fullName evidence="1">Ribosome-recycling factor</fullName>
        <shortName evidence="1">RRF</shortName>
    </recommendedName>
    <alternativeName>
        <fullName evidence="1">Ribosome-releasing factor</fullName>
    </alternativeName>
</protein>
<reference key="1">
    <citation type="journal article" date="2010" name="Genome Biol. Evol.">
        <title>Continuing evolution of Burkholderia mallei through genome reduction and large-scale rearrangements.</title>
        <authorList>
            <person name="Losada L."/>
            <person name="Ronning C.M."/>
            <person name="DeShazer D."/>
            <person name="Woods D."/>
            <person name="Fedorova N."/>
            <person name="Kim H.S."/>
            <person name="Shabalina S.A."/>
            <person name="Pearson T.R."/>
            <person name="Brinkac L."/>
            <person name="Tan P."/>
            <person name="Nandi T."/>
            <person name="Crabtree J."/>
            <person name="Badger J."/>
            <person name="Beckstrom-Sternberg S."/>
            <person name="Saqib M."/>
            <person name="Schutzer S.E."/>
            <person name="Keim P."/>
            <person name="Nierman W.C."/>
        </authorList>
    </citation>
    <scope>NUCLEOTIDE SEQUENCE [LARGE SCALE GENOMIC DNA]</scope>
    <source>
        <strain>668</strain>
    </source>
</reference>
<feature type="chain" id="PRO_1000003123" description="Ribosome-recycling factor">
    <location>
        <begin position="1"/>
        <end position="186"/>
    </location>
</feature>
<keyword id="KW-0963">Cytoplasm</keyword>
<keyword id="KW-0648">Protein biosynthesis</keyword>